<feature type="chain" id="PRO_1000057247" description="UDP-N-acetylglucosamine--N-acetylmuramyl-(pentapeptide) pyrophosphoryl-undecaprenol N-acetylglucosamine transferase">
    <location>
        <begin position="1"/>
        <end position="355"/>
    </location>
</feature>
<feature type="binding site" evidence="1">
    <location>
        <begin position="15"/>
        <end position="17"/>
    </location>
    <ligand>
        <name>UDP-N-acetyl-alpha-D-glucosamine</name>
        <dbReference type="ChEBI" id="CHEBI:57705"/>
    </ligand>
</feature>
<feature type="binding site" evidence="1">
    <location>
        <position position="127"/>
    </location>
    <ligand>
        <name>UDP-N-acetyl-alpha-D-glucosamine</name>
        <dbReference type="ChEBI" id="CHEBI:57705"/>
    </ligand>
</feature>
<feature type="binding site" evidence="1">
    <location>
        <position position="163"/>
    </location>
    <ligand>
        <name>UDP-N-acetyl-alpha-D-glucosamine</name>
        <dbReference type="ChEBI" id="CHEBI:57705"/>
    </ligand>
</feature>
<feature type="binding site" evidence="1">
    <location>
        <position position="191"/>
    </location>
    <ligand>
        <name>UDP-N-acetyl-alpha-D-glucosamine</name>
        <dbReference type="ChEBI" id="CHEBI:57705"/>
    </ligand>
</feature>
<feature type="binding site" evidence="1">
    <location>
        <position position="244"/>
    </location>
    <ligand>
        <name>UDP-N-acetyl-alpha-D-glucosamine</name>
        <dbReference type="ChEBI" id="CHEBI:57705"/>
    </ligand>
</feature>
<feature type="binding site" evidence="1">
    <location>
        <begin position="263"/>
        <end position="268"/>
    </location>
    <ligand>
        <name>UDP-N-acetyl-alpha-D-glucosamine</name>
        <dbReference type="ChEBI" id="CHEBI:57705"/>
    </ligand>
</feature>
<feature type="binding site" evidence="1">
    <location>
        <position position="288"/>
    </location>
    <ligand>
        <name>UDP-N-acetyl-alpha-D-glucosamine</name>
        <dbReference type="ChEBI" id="CHEBI:57705"/>
    </ligand>
</feature>
<evidence type="ECO:0000255" key="1">
    <source>
        <dbReference type="HAMAP-Rule" id="MF_00033"/>
    </source>
</evidence>
<accession>A7ZHI1</accession>
<protein>
    <recommendedName>
        <fullName evidence="1">UDP-N-acetylglucosamine--N-acetylmuramyl-(pentapeptide) pyrophosphoryl-undecaprenol N-acetylglucosamine transferase</fullName>
        <ecNumber evidence="1">2.4.1.227</ecNumber>
    </recommendedName>
    <alternativeName>
        <fullName evidence="1">Undecaprenyl-PP-MurNAc-pentapeptide-UDPGlcNAc GlcNAc transferase</fullName>
    </alternativeName>
</protein>
<dbReference type="EC" id="2.4.1.227" evidence="1"/>
<dbReference type="EMBL" id="CP000800">
    <property type="protein sequence ID" value="ABV16706.1"/>
    <property type="molecule type" value="Genomic_DNA"/>
</dbReference>
<dbReference type="RefSeq" id="WP_000016559.1">
    <property type="nucleotide sequence ID" value="NC_009801.1"/>
</dbReference>
<dbReference type="SMR" id="A7ZHI1"/>
<dbReference type="CAZy" id="GT28">
    <property type="family name" value="Glycosyltransferase Family 28"/>
</dbReference>
<dbReference type="GeneID" id="93777344"/>
<dbReference type="KEGG" id="ecw:EcE24377A_0092"/>
<dbReference type="HOGENOM" id="CLU_037404_2_0_6"/>
<dbReference type="UniPathway" id="UPA00219"/>
<dbReference type="Proteomes" id="UP000001122">
    <property type="component" value="Chromosome"/>
</dbReference>
<dbReference type="GO" id="GO:0005886">
    <property type="term" value="C:plasma membrane"/>
    <property type="evidence" value="ECO:0007669"/>
    <property type="project" value="UniProtKB-SubCell"/>
</dbReference>
<dbReference type="GO" id="GO:0051991">
    <property type="term" value="F:UDP-N-acetyl-D-glucosamine:N-acetylmuramoyl-L-alanyl-D-glutamyl-meso-2,6-diaminopimelyl-D-alanyl-D-alanine-diphosphoundecaprenol 4-beta-N-acetylglucosaminlytransferase activity"/>
    <property type="evidence" value="ECO:0007669"/>
    <property type="project" value="RHEA"/>
</dbReference>
<dbReference type="GO" id="GO:0050511">
    <property type="term" value="F:undecaprenyldiphospho-muramoylpentapeptide beta-N-acetylglucosaminyltransferase activity"/>
    <property type="evidence" value="ECO:0007669"/>
    <property type="project" value="UniProtKB-UniRule"/>
</dbReference>
<dbReference type="GO" id="GO:0005975">
    <property type="term" value="P:carbohydrate metabolic process"/>
    <property type="evidence" value="ECO:0007669"/>
    <property type="project" value="InterPro"/>
</dbReference>
<dbReference type="GO" id="GO:0051301">
    <property type="term" value="P:cell division"/>
    <property type="evidence" value="ECO:0007669"/>
    <property type="project" value="UniProtKB-KW"/>
</dbReference>
<dbReference type="GO" id="GO:0071555">
    <property type="term" value="P:cell wall organization"/>
    <property type="evidence" value="ECO:0007669"/>
    <property type="project" value="UniProtKB-KW"/>
</dbReference>
<dbReference type="GO" id="GO:0030259">
    <property type="term" value="P:lipid glycosylation"/>
    <property type="evidence" value="ECO:0007669"/>
    <property type="project" value="UniProtKB-UniRule"/>
</dbReference>
<dbReference type="GO" id="GO:0009252">
    <property type="term" value="P:peptidoglycan biosynthetic process"/>
    <property type="evidence" value="ECO:0007669"/>
    <property type="project" value="UniProtKB-UniRule"/>
</dbReference>
<dbReference type="GO" id="GO:0008360">
    <property type="term" value="P:regulation of cell shape"/>
    <property type="evidence" value="ECO:0007669"/>
    <property type="project" value="UniProtKB-KW"/>
</dbReference>
<dbReference type="CDD" id="cd03785">
    <property type="entry name" value="GT28_MurG"/>
    <property type="match status" value="1"/>
</dbReference>
<dbReference type="FunFam" id="3.40.50.2000:FF:000016">
    <property type="entry name" value="UDP-N-acetylglucosamine--N-acetylmuramyl-(pentapeptide) pyrophosphoryl-undecaprenol N-acetylglucosamine transferase"/>
    <property type="match status" value="1"/>
</dbReference>
<dbReference type="FunFam" id="3.40.50.2000:FF:000018">
    <property type="entry name" value="UDP-N-acetylglucosamine--N-acetylmuramyl-(pentapeptide) pyrophosphoryl-undecaprenol N-acetylglucosamine transferase"/>
    <property type="match status" value="1"/>
</dbReference>
<dbReference type="Gene3D" id="3.40.50.2000">
    <property type="entry name" value="Glycogen Phosphorylase B"/>
    <property type="match status" value="2"/>
</dbReference>
<dbReference type="HAMAP" id="MF_00033">
    <property type="entry name" value="MurG"/>
    <property type="match status" value="1"/>
</dbReference>
<dbReference type="InterPro" id="IPR006009">
    <property type="entry name" value="GlcNAc_MurG"/>
</dbReference>
<dbReference type="InterPro" id="IPR007235">
    <property type="entry name" value="Glyco_trans_28_C"/>
</dbReference>
<dbReference type="InterPro" id="IPR004276">
    <property type="entry name" value="GlycoTrans_28_N"/>
</dbReference>
<dbReference type="NCBIfam" id="TIGR01133">
    <property type="entry name" value="murG"/>
    <property type="match status" value="1"/>
</dbReference>
<dbReference type="PANTHER" id="PTHR21015:SF22">
    <property type="entry name" value="GLYCOSYLTRANSFERASE"/>
    <property type="match status" value="1"/>
</dbReference>
<dbReference type="PANTHER" id="PTHR21015">
    <property type="entry name" value="UDP-N-ACETYLGLUCOSAMINE--N-ACETYLMURAMYL-(PENTAPEPTIDE) PYROPHOSPHORYL-UNDECAPRENOL N-ACETYLGLUCOSAMINE TRANSFERASE 1"/>
    <property type="match status" value="1"/>
</dbReference>
<dbReference type="Pfam" id="PF04101">
    <property type="entry name" value="Glyco_tran_28_C"/>
    <property type="match status" value="1"/>
</dbReference>
<dbReference type="Pfam" id="PF03033">
    <property type="entry name" value="Glyco_transf_28"/>
    <property type="match status" value="1"/>
</dbReference>
<dbReference type="SUPFAM" id="SSF53756">
    <property type="entry name" value="UDP-Glycosyltransferase/glycogen phosphorylase"/>
    <property type="match status" value="1"/>
</dbReference>
<comment type="function">
    <text evidence="1">Cell wall formation. Catalyzes the transfer of a GlcNAc subunit on undecaprenyl-pyrophosphoryl-MurNAc-pentapeptide (lipid intermediate I) to form undecaprenyl-pyrophosphoryl-MurNAc-(pentapeptide)GlcNAc (lipid intermediate II).</text>
</comment>
<comment type="catalytic activity">
    <reaction evidence="1">
        <text>di-trans,octa-cis-undecaprenyl diphospho-N-acetyl-alpha-D-muramoyl-L-alanyl-D-glutamyl-meso-2,6-diaminopimeloyl-D-alanyl-D-alanine + UDP-N-acetyl-alpha-D-glucosamine = di-trans,octa-cis-undecaprenyl diphospho-[N-acetyl-alpha-D-glucosaminyl-(1-&gt;4)]-N-acetyl-alpha-D-muramoyl-L-alanyl-D-glutamyl-meso-2,6-diaminopimeloyl-D-alanyl-D-alanine + UDP + H(+)</text>
        <dbReference type="Rhea" id="RHEA:31227"/>
        <dbReference type="ChEBI" id="CHEBI:15378"/>
        <dbReference type="ChEBI" id="CHEBI:57705"/>
        <dbReference type="ChEBI" id="CHEBI:58223"/>
        <dbReference type="ChEBI" id="CHEBI:61387"/>
        <dbReference type="ChEBI" id="CHEBI:61388"/>
        <dbReference type="EC" id="2.4.1.227"/>
    </reaction>
</comment>
<comment type="pathway">
    <text evidence="1">Cell wall biogenesis; peptidoglycan biosynthesis.</text>
</comment>
<comment type="subcellular location">
    <subcellularLocation>
        <location evidence="1">Cell inner membrane</location>
        <topology evidence="1">Peripheral membrane protein</topology>
        <orientation evidence="1">Cytoplasmic side</orientation>
    </subcellularLocation>
</comment>
<comment type="similarity">
    <text evidence="1">Belongs to the glycosyltransferase 28 family. MurG subfamily.</text>
</comment>
<name>MURG_ECO24</name>
<sequence length="355" mass="37787">MSGQGKRLMVMAGGTGGHVFPGLAVAHHLMAQGWQVRWLGTADRMEADLVPKHGIEIDFIRISGLRGKGIKALIAAPLRIFNAWRQARAIMKAYKPDVVLGMGGYVSGPGGLAAWSLGIPVVLHEQNGIAGLTNKWLAKIATKVMQAFPGAFPNAEVVGNPVRTDVLALPLPQQRLAGREGPVRVLVVGGSQGARILNQTMPQVAAKLGDSVTIWHQSGKGSQQSVEQAYAEAGQPQHKVTEFIDDMAAAYAWADVVVCRSGALTVSEIAAAGLPALFVPFQHKDRQQYWNALPLEKAGAAKIIEQPQLSVDAVANTLAGWSRETLLTMAERARAASIPDATERVANEVSRAARA</sequence>
<proteinExistence type="inferred from homology"/>
<keyword id="KW-0131">Cell cycle</keyword>
<keyword id="KW-0132">Cell division</keyword>
<keyword id="KW-0997">Cell inner membrane</keyword>
<keyword id="KW-1003">Cell membrane</keyword>
<keyword id="KW-0133">Cell shape</keyword>
<keyword id="KW-0961">Cell wall biogenesis/degradation</keyword>
<keyword id="KW-0328">Glycosyltransferase</keyword>
<keyword id="KW-0472">Membrane</keyword>
<keyword id="KW-0573">Peptidoglycan synthesis</keyword>
<keyword id="KW-1185">Reference proteome</keyword>
<keyword id="KW-0808">Transferase</keyword>
<organism>
    <name type="scientific">Escherichia coli O139:H28 (strain E24377A / ETEC)</name>
    <dbReference type="NCBI Taxonomy" id="331111"/>
    <lineage>
        <taxon>Bacteria</taxon>
        <taxon>Pseudomonadati</taxon>
        <taxon>Pseudomonadota</taxon>
        <taxon>Gammaproteobacteria</taxon>
        <taxon>Enterobacterales</taxon>
        <taxon>Enterobacteriaceae</taxon>
        <taxon>Escherichia</taxon>
    </lineage>
</organism>
<gene>
    <name evidence="1" type="primary">murG</name>
    <name type="ordered locus">EcE24377A_0092</name>
</gene>
<reference key="1">
    <citation type="journal article" date="2008" name="J. Bacteriol.">
        <title>The pangenome structure of Escherichia coli: comparative genomic analysis of E. coli commensal and pathogenic isolates.</title>
        <authorList>
            <person name="Rasko D.A."/>
            <person name="Rosovitz M.J."/>
            <person name="Myers G.S.A."/>
            <person name="Mongodin E.F."/>
            <person name="Fricke W.F."/>
            <person name="Gajer P."/>
            <person name="Crabtree J."/>
            <person name="Sebaihia M."/>
            <person name="Thomson N.R."/>
            <person name="Chaudhuri R."/>
            <person name="Henderson I.R."/>
            <person name="Sperandio V."/>
            <person name="Ravel J."/>
        </authorList>
    </citation>
    <scope>NUCLEOTIDE SEQUENCE [LARGE SCALE GENOMIC DNA]</scope>
    <source>
        <strain>E24377A / ETEC</strain>
    </source>
</reference>